<keyword id="KW-1185">Reference proteome</keyword>
<keyword id="KW-0946">Virion</keyword>
<sequence>MSTVADTMQTLSNDIQLTFEELIKLLLRKTLKPILNPLGNNNIVYNSIKGKYERGLVNSANNDNINRYTYTMTKESLGWTDEILAHFRINAKFIKSSVPQRFPSNTKYHNMMKPNAKISFSDKETKNIINQCGENAICQYKNLLSMLNTRNVTGILANKKATFNYSSDIPYTYTFKELEDIGKDIIDQTDPSIPGCDSARMSTAMLRVRLYNLEQNLAKLSVDKPDIFDAYIDMLRIINGVPRKKIVWVIKLIALLTYQRWEDLDKQKHQKYYEILGDDFVNSFNSNELITILLQSNSSEYIIKASLLFPLLKMLFIVFGYSKLVPVISDINAEAQAAEHERLRKFYDKYKGATIRRQSDDQNKFYETECAENNFNADHAIKQIYGKADPEPIDQCVYDFIRLFGDLYPTLIGLMGGTEKFPPESIEINCNEIPHSYEDLTIIPEFLWRFNDFSYCRYLEYICSKQLHNVLNYKVNEKTRYLQSI</sequence>
<organism>
    <name type="scientific">Acanthamoeba polyphaga mimivirus</name>
    <name type="common">APMV</name>
    <dbReference type="NCBI Taxonomy" id="212035"/>
    <lineage>
        <taxon>Viruses</taxon>
        <taxon>Varidnaviria</taxon>
        <taxon>Bamfordvirae</taxon>
        <taxon>Nucleocytoviricota</taxon>
        <taxon>Megaviricetes</taxon>
        <taxon>Imitervirales</taxon>
        <taxon>Mimiviridae</taxon>
        <taxon>Megamimivirinae</taxon>
        <taxon>Mimivirus</taxon>
        <taxon>Mimivirus bradfordmassiliense</taxon>
    </lineage>
</organism>
<name>YR347_MIMIV</name>
<proteinExistence type="evidence at protein level"/>
<dbReference type="EMBL" id="AY653733">
    <property type="protein sequence ID" value="AAV50616.1"/>
    <property type="molecule type" value="Genomic_DNA"/>
</dbReference>
<dbReference type="KEGG" id="vg:9924966"/>
<dbReference type="OrthoDB" id="5399at10239"/>
<dbReference type="Proteomes" id="UP000001134">
    <property type="component" value="Genome"/>
</dbReference>
<dbReference type="GO" id="GO:0044423">
    <property type="term" value="C:virion component"/>
    <property type="evidence" value="ECO:0007669"/>
    <property type="project" value="UniProtKB-KW"/>
</dbReference>
<evidence type="ECO:0000269" key="1">
    <source>
    </source>
</evidence>
<feature type="chain" id="PRO_0000243964" description="Uncharacterized protein R347">
    <location>
        <begin position="1"/>
        <end position="485"/>
    </location>
</feature>
<comment type="subcellular location">
    <subcellularLocation>
        <location evidence="1">Virion</location>
    </subcellularLocation>
</comment>
<reference key="1">
    <citation type="journal article" date="2004" name="Science">
        <title>The 1.2-megabase genome sequence of Mimivirus.</title>
        <authorList>
            <person name="Raoult D."/>
            <person name="Audic S."/>
            <person name="Robert C."/>
            <person name="Abergel C."/>
            <person name="Renesto P."/>
            <person name="Ogata H."/>
            <person name="La Scola B."/>
            <person name="Susan M."/>
            <person name="Claverie J.-M."/>
        </authorList>
    </citation>
    <scope>NUCLEOTIDE SEQUENCE [LARGE SCALE GENOMIC DNA]</scope>
    <source>
        <strain>Rowbotham-Bradford</strain>
    </source>
</reference>
<reference key="2">
    <citation type="journal article" date="2006" name="J. Virol.">
        <title>Mimivirus giant particles incorporate a large fraction of anonymous and unique gene products.</title>
        <authorList>
            <person name="Renesto P."/>
            <person name="Abergel C."/>
            <person name="Decloquement P."/>
            <person name="Moinier D."/>
            <person name="Azza S."/>
            <person name="Ogata H."/>
            <person name="Fourquet P."/>
            <person name="Gorvel J.-P."/>
            <person name="Claverie J.-M."/>
            <person name="Raoult D."/>
        </authorList>
    </citation>
    <scope>IDENTIFICATION BY MASS SPECTROMETRY [LARGE SCALE ANALYSIS]</scope>
    <scope>SUBCELLULAR LOCATION</scope>
</reference>
<protein>
    <recommendedName>
        <fullName>Uncharacterized protein R347</fullName>
    </recommendedName>
</protein>
<gene>
    <name type="ordered locus">MIMI_R347</name>
</gene>
<organismHost>
    <name type="scientific">Acanthamoeba polyphaga</name>
    <name type="common">Amoeba</name>
    <dbReference type="NCBI Taxonomy" id="5757"/>
</organismHost>
<accession>Q5UQT3</accession>